<proteinExistence type="evidence at protein level"/>
<dbReference type="EC" id="3.6.4.-"/>
<dbReference type="EMBL" id="FO081012">
    <property type="protein sequence ID" value="CCD68481.1"/>
    <property type="molecule type" value="Genomic_DNA"/>
</dbReference>
<dbReference type="PIR" id="T03922">
    <property type="entry name" value="T03922"/>
</dbReference>
<dbReference type="RefSeq" id="NP_504197.1">
    <property type="nucleotide sequence ID" value="NM_071796.6"/>
</dbReference>
<dbReference type="PDB" id="4L15">
    <property type="method" value="X-ray"/>
    <property type="resolution" value="2.60 A"/>
    <property type="chains" value="A=261-594"/>
</dbReference>
<dbReference type="PDB" id="4L16">
    <property type="method" value="X-ray"/>
    <property type="resolution" value="2.80 A"/>
    <property type="chains" value="A=261-594"/>
</dbReference>
<dbReference type="PDBsum" id="4L15"/>
<dbReference type="PDBsum" id="4L16"/>
<dbReference type="SMR" id="O16299"/>
<dbReference type="BioGRID" id="43882">
    <property type="interactions" value="24"/>
</dbReference>
<dbReference type="DIP" id="DIP-25869N"/>
<dbReference type="FunCoup" id="O16299">
    <property type="interactions" value="2685"/>
</dbReference>
<dbReference type="IntAct" id="O16299">
    <property type="interactions" value="18"/>
</dbReference>
<dbReference type="MINT" id="O16299"/>
<dbReference type="STRING" id="6239.F32D1.1a.2"/>
<dbReference type="PaxDb" id="6239-F32D1.1"/>
<dbReference type="PeptideAtlas" id="O16299"/>
<dbReference type="EnsemblMetazoa" id="F32D1.1a.1">
    <property type="protein sequence ID" value="F32D1.1a.1"/>
    <property type="gene ID" value="WBGene00017981"/>
</dbReference>
<dbReference type="GeneID" id="178829"/>
<dbReference type="KEGG" id="cel:CELE_F32D1.1"/>
<dbReference type="UCSC" id="F32D1.1">
    <property type="organism name" value="c. elegans"/>
</dbReference>
<dbReference type="AGR" id="WB:WBGene00017981"/>
<dbReference type="CTD" id="178829"/>
<dbReference type="WormBase" id="F32D1.1a">
    <property type="protein sequence ID" value="CE09865"/>
    <property type="gene ID" value="WBGene00017981"/>
    <property type="gene designation" value="figl-1"/>
</dbReference>
<dbReference type="eggNOG" id="KOG0740">
    <property type="taxonomic scope" value="Eukaryota"/>
</dbReference>
<dbReference type="GeneTree" id="ENSGT00940000171393"/>
<dbReference type="HOGENOM" id="CLU_032424_0_0_1"/>
<dbReference type="InParanoid" id="O16299"/>
<dbReference type="OMA" id="PFTMRGF"/>
<dbReference type="OrthoDB" id="10251136at2759"/>
<dbReference type="PhylomeDB" id="O16299"/>
<dbReference type="SABIO-RK" id="O16299"/>
<dbReference type="SignaLink" id="O16299"/>
<dbReference type="EvolutionaryTrace" id="O16299"/>
<dbReference type="PRO" id="PR:O16299"/>
<dbReference type="Proteomes" id="UP000001940">
    <property type="component" value="Chromosome V"/>
</dbReference>
<dbReference type="Bgee" id="WBGene00017981">
    <property type="expression patterns" value="Expressed in germ line (C elegans) and 4 other cell types or tissues"/>
</dbReference>
<dbReference type="ExpressionAtlas" id="O16299">
    <property type="expression patterns" value="baseline and differential"/>
</dbReference>
<dbReference type="GO" id="GO:0005634">
    <property type="term" value="C:nucleus"/>
    <property type="evidence" value="ECO:0000314"/>
    <property type="project" value="WormBase"/>
</dbReference>
<dbReference type="GO" id="GO:0005524">
    <property type="term" value="F:ATP binding"/>
    <property type="evidence" value="ECO:0007669"/>
    <property type="project" value="UniProtKB-KW"/>
</dbReference>
<dbReference type="GO" id="GO:0016887">
    <property type="term" value="F:ATP hydrolysis activity"/>
    <property type="evidence" value="ECO:0000314"/>
    <property type="project" value="WormBase"/>
</dbReference>
<dbReference type="GO" id="GO:0016787">
    <property type="term" value="F:hydrolase activity"/>
    <property type="evidence" value="ECO:0000314"/>
    <property type="project" value="UniProtKB"/>
</dbReference>
<dbReference type="GO" id="GO:0000287">
    <property type="term" value="F:magnesium ion binding"/>
    <property type="evidence" value="ECO:0000314"/>
    <property type="project" value="UniProtKB"/>
</dbReference>
<dbReference type="GO" id="GO:0008017">
    <property type="term" value="F:microtubule binding"/>
    <property type="evidence" value="ECO:0000314"/>
    <property type="project" value="WormBase"/>
</dbReference>
<dbReference type="GO" id="GO:0008568">
    <property type="term" value="F:microtubule severing ATPase activity"/>
    <property type="evidence" value="ECO:0000318"/>
    <property type="project" value="GO_Central"/>
</dbReference>
<dbReference type="GO" id="GO:0046034">
    <property type="term" value="P:ATP metabolic process"/>
    <property type="evidence" value="ECO:0000314"/>
    <property type="project" value="UniProtKB"/>
</dbReference>
<dbReference type="GO" id="GO:0051301">
    <property type="term" value="P:cell division"/>
    <property type="evidence" value="ECO:0007669"/>
    <property type="project" value="UniProtKB-KW"/>
</dbReference>
<dbReference type="GO" id="GO:0045931">
    <property type="term" value="P:positive regulation of mitotic cell cycle"/>
    <property type="evidence" value="ECO:0000315"/>
    <property type="project" value="WormBase"/>
</dbReference>
<dbReference type="FunFam" id="1.10.8.60:FF:000022">
    <property type="entry name" value="Fidgetin like 1"/>
    <property type="match status" value="1"/>
</dbReference>
<dbReference type="FunFam" id="3.40.50.300:FF:000093">
    <property type="entry name" value="Fidgetin-like 1"/>
    <property type="match status" value="1"/>
</dbReference>
<dbReference type="Gene3D" id="1.10.8.60">
    <property type="match status" value="1"/>
</dbReference>
<dbReference type="Gene3D" id="3.40.50.300">
    <property type="entry name" value="P-loop containing nucleotide triphosphate hydrolases"/>
    <property type="match status" value="1"/>
</dbReference>
<dbReference type="InterPro" id="IPR003593">
    <property type="entry name" value="AAA+_ATPase"/>
</dbReference>
<dbReference type="InterPro" id="IPR041569">
    <property type="entry name" value="AAA_lid_3"/>
</dbReference>
<dbReference type="InterPro" id="IPR003959">
    <property type="entry name" value="ATPase_AAA_core"/>
</dbReference>
<dbReference type="InterPro" id="IPR003960">
    <property type="entry name" value="ATPase_AAA_CS"/>
</dbReference>
<dbReference type="InterPro" id="IPR050304">
    <property type="entry name" value="MT-severing_AAA_ATPase"/>
</dbReference>
<dbReference type="InterPro" id="IPR027417">
    <property type="entry name" value="P-loop_NTPase"/>
</dbReference>
<dbReference type="InterPro" id="IPR015415">
    <property type="entry name" value="Spast_Vps4_C"/>
</dbReference>
<dbReference type="PANTHER" id="PTHR23074">
    <property type="entry name" value="AAA DOMAIN-CONTAINING"/>
    <property type="match status" value="1"/>
</dbReference>
<dbReference type="PANTHER" id="PTHR23074:SF17">
    <property type="entry name" value="FIDGETIN-LIKE PROTEIN 1"/>
    <property type="match status" value="1"/>
</dbReference>
<dbReference type="Pfam" id="PF00004">
    <property type="entry name" value="AAA"/>
    <property type="match status" value="1"/>
</dbReference>
<dbReference type="Pfam" id="PF17862">
    <property type="entry name" value="AAA_lid_3"/>
    <property type="match status" value="1"/>
</dbReference>
<dbReference type="Pfam" id="PF09336">
    <property type="entry name" value="Vps4_C"/>
    <property type="match status" value="1"/>
</dbReference>
<dbReference type="SMART" id="SM00382">
    <property type="entry name" value="AAA"/>
    <property type="match status" value="1"/>
</dbReference>
<dbReference type="SUPFAM" id="SSF52540">
    <property type="entry name" value="P-loop containing nucleoside triphosphate hydrolases"/>
    <property type="match status" value="1"/>
</dbReference>
<dbReference type="PROSITE" id="PS00674">
    <property type="entry name" value="AAA"/>
    <property type="match status" value="1"/>
</dbReference>
<organism>
    <name type="scientific">Caenorhabditis elegans</name>
    <dbReference type="NCBI Taxonomy" id="6239"/>
    <lineage>
        <taxon>Eukaryota</taxon>
        <taxon>Metazoa</taxon>
        <taxon>Ecdysozoa</taxon>
        <taxon>Nematoda</taxon>
        <taxon>Chromadorea</taxon>
        <taxon>Rhabditida</taxon>
        <taxon>Rhabditina</taxon>
        <taxon>Rhabditomorpha</taxon>
        <taxon>Rhabditoidea</taxon>
        <taxon>Rhabditidae</taxon>
        <taxon>Peloderinae</taxon>
        <taxon>Caenorhabditis</taxon>
    </lineage>
</organism>
<comment type="function">
    <text evidence="5">Has a role in spindle assembly which acts in the progression through mitosis during embryogenesis. Required for fertility.</text>
</comment>
<comment type="catalytic activity">
    <reaction evidence="3">
        <text>ATP + H2O = ADP + phosphate + H(+)</text>
        <dbReference type="Rhea" id="RHEA:13065"/>
        <dbReference type="ChEBI" id="CHEBI:15377"/>
        <dbReference type="ChEBI" id="CHEBI:15378"/>
        <dbReference type="ChEBI" id="CHEBI:30616"/>
        <dbReference type="ChEBI" id="CHEBI:43474"/>
        <dbReference type="ChEBI" id="CHEBI:456216"/>
    </reaction>
</comment>
<comment type="cofactor">
    <cofactor evidence="3">
        <name>Mg(2+)</name>
        <dbReference type="ChEBI" id="CHEBI:18420"/>
    </cofactor>
</comment>
<comment type="biophysicochemical properties">
    <kinetics>
        <KM evidence="3">0.44 mM for ATP</KM>
        <Vmax evidence="3">225.0 nmol/min/mg enzyme</Vmax>
        <text>At 25 degrees Celsius and pH 8.0.</text>
    </kinetics>
    <phDependence>
        <text evidence="3">Optimum pH is 8.0-8.8.</text>
    </phDependence>
    <temperatureDependence>
        <text evidence="3">Optimum temperature is 25-30 degrees Celsius.</text>
    </temperatureDependence>
</comment>
<comment type="subunit">
    <text evidence="4">Hexamer.</text>
</comment>
<comment type="interaction">
    <interactant intactId="EBI-320880">
        <id>O16299</id>
    </interactant>
    <interactant intactId="EBI-2315822">
        <id>Q7K7J0</id>
        <label>gei-18</label>
    </interactant>
    <organismsDiffer>false</organismsDiffer>
    <experiments>4</experiments>
</comment>
<comment type="interaction">
    <interactant intactId="EBI-320880">
        <id>O16299</id>
    </interactant>
    <interactant intactId="EBI-2414252">
        <id>Q9U2T9</id>
        <label>itsn-1</label>
    </interactant>
    <organismsDiffer>false</organismsDiffer>
    <experiments>3</experiments>
</comment>
<comment type="interaction">
    <interactant intactId="EBI-320880">
        <id>O16299</id>
    </interactant>
    <interactant intactId="EBI-325337">
        <id>G5EC32</id>
        <label>sorb-1</label>
    </interactant>
    <organismsDiffer>false</organismsDiffer>
    <experiments>8</experiments>
</comment>
<comment type="interaction">
    <interactant intactId="EBI-320880">
        <id>O16299</id>
    </interactant>
    <interactant intactId="EBI-2315635">
        <id>Q8MPT2</id>
        <label>T04C9.1</label>
    </interactant>
    <organismsDiffer>false</organismsDiffer>
    <experiments>5</experiments>
</comment>
<comment type="subcellular location">
    <subcellularLocation>
        <location evidence="5">Nucleus</location>
    </subcellularLocation>
</comment>
<comment type="tissue specificity">
    <text evidence="5">Expressed in germ cells.</text>
</comment>
<comment type="disruption phenotype">
    <text evidence="5">Sterility owing to depletion of germ cells.</text>
</comment>
<comment type="similarity">
    <text evidence="6">Belongs to the AAA ATPase family.</text>
</comment>
<evidence type="ECO:0000250" key="1">
    <source>
        <dbReference type="UniProtKB" id="Q6PIW4"/>
    </source>
</evidence>
<evidence type="ECO:0000256" key="2">
    <source>
        <dbReference type="SAM" id="MobiDB-lite"/>
    </source>
</evidence>
<evidence type="ECO:0000269" key="3">
    <source>
    </source>
</evidence>
<evidence type="ECO:0000269" key="4">
    <source>
    </source>
</evidence>
<evidence type="ECO:0000269" key="5">
    <source>
    </source>
</evidence>
<evidence type="ECO:0000305" key="6"/>
<evidence type="ECO:0007829" key="7">
    <source>
        <dbReference type="PDB" id="4L15"/>
    </source>
</evidence>
<protein>
    <recommendedName>
        <fullName>Fidgetin-like protein 1</fullName>
        <ecNumber>3.6.4.-</ecNumber>
    </recommendedName>
    <alternativeName>
        <fullName>Fidgetin homolog</fullName>
    </alternativeName>
</protein>
<sequence>MYSPKRVKLNVTSGMRKRPETGENNDDLYPPTALARNGISPYFIGKPRRKIVVETPSDSAQQQPPFKSRSQQNGLDDELDGIIIDEDEDRTVDVSFSQKQDTRKLKSRPFLGEKSSFKLGEIPKPKEEKRREEPFTMRGFDFGSDDKVTKIRDKICDIVDPTNARRTDPNFIRQMHENTLKGIEVASNPHFKKTRAPTKNRAAIQNTLGTLYPSFTTAAGQDPQNSKFQVPLDRQSSSQSIGSLAGIPPARRAPDIPKRCSNPLIRKAMGMDTEGGGKDEKMSGLRAEPTLKHFDENIISLIESEIMSVNNEIGWADVAGLEGAKKALREIVVLPFKRPDVFTGIRAPPKGVLLFGPPGTGKTMIGRCVASQCKATFFNISASSLTSKWVGEGEKLVRALFSVARLKLPSVIFIDEIDSLLSSRSESEHESSRRIKTEFLVQLDGVNTAPDERLLVLGATNRPQELDEAARRRFQKRLYIALPEPESRTQIVQNLLVGTRHDITNHNLERIRELTDGYSGADMRQLCTEAAMGPIRDIGDDIETIDKDDIRAVTVMDFAEAARVVRPTVDDSQLDAYAAWDKKFGCLPPPSISR</sequence>
<accession>O16299</accession>
<gene>
    <name type="primary">figl-1</name>
    <name type="ORF">F32D1.1</name>
</gene>
<reference key="1">
    <citation type="journal article" date="1998" name="Science">
        <title>Genome sequence of the nematode C. elegans: a platform for investigating biology.</title>
        <authorList>
            <consortium name="The C. elegans sequencing consortium"/>
        </authorList>
    </citation>
    <scope>NUCLEOTIDE SEQUENCE [LARGE SCALE GENOMIC DNA]</scope>
    <source>
        <strain>Bristol N2</strain>
    </source>
</reference>
<reference key="2">
    <citation type="journal article" date="2004" name="FEBS Lett.">
        <title>Identification of a cysteine residue important for the ATPase activity of C. elegans fidgetin homologue.</title>
        <authorList>
            <person name="Yakushiji Y."/>
            <person name="Yamanaka K."/>
            <person name="Ogura T."/>
        </authorList>
    </citation>
    <scope>CATALYTIC ACTIVITY</scope>
    <scope>COFACTOR</scope>
    <scope>BIOPHYSICOCHEMICAL PROPERTIES</scope>
    <scope>MUTAGENESIS OF THR-360; CYS-368; CYS-373 AND CYS-527</scope>
</reference>
<reference key="3">
    <citation type="journal article" date="2006" name="J. Struct. Biol.">
        <title>Mutational analysis of the functional motifs in the ATPase domain of Caenorhabditis elegans fidgetin homologue FIGL-1: firm evidence for an intersubunit catalysis mechanism of ATP hydrolysis by AAA ATPases.</title>
        <authorList>
            <person name="Yakushiji Y."/>
            <person name="Nishikori S."/>
            <person name="Yamanaka K."/>
            <person name="Ogura T."/>
        </authorList>
    </citation>
    <scope>SUBUNIT</scope>
    <scope>MUTAGENESIS OF LYS-362; GLU-416; ASN-461; ARG-471; ARG-472 AND ARG-473</scope>
</reference>
<reference key="4">
    <citation type="journal article" date="2007" name="J. Cell Sci.">
        <title>The AAA-ATPase FIGL-1 controls mitotic progression, and its levels are regulated by the CUL-3MEL-26 E3 ligase in the C. elegans germ line.</title>
        <authorList>
            <person name="Luke-Glaser S."/>
            <person name="Pintard L."/>
            <person name="Tyers M."/>
            <person name="Peter M."/>
        </authorList>
    </citation>
    <scope>FUNCTION</scope>
    <scope>SUBCELLULAR LOCATION</scope>
    <scope>TISSUE SPECIFICITY</scope>
    <scope>DISRUPTION PHENOTYPE</scope>
</reference>
<keyword id="KW-0002">3D-structure</keyword>
<keyword id="KW-0067">ATP-binding</keyword>
<keyword id="KW-0131">Cell cycle</keyword>
<keyword id="KW-0132">Cell division</keyword>
<keyword id="KW-0378">Hydrolase</keyword>
<keyword id="KW-0460">Magnesium</keyword>
<keyword id="KW-0479">Metal-binding</keyword>
<keyword id="KW-0498">Mitosis</keyword>
<keyword id="KW-0547">Nucleotide-binding</keyword>
<keyword id="KW-0539">Nucleus</keyword>
<keyword id="KW-1185">Reference proteome</keyword>
<feature type="chain" id="PRO_0000302729" description="Fidgetin-like protein 1">
    <location>
        <begin position="1"/>
        <end position="594"/>
    </location>
</feature>
<feature type="region of interest" description="Disordered" evidence="2">
    <location>
        <begin position="1"/>
        <end position="79"/>
    </location>
</feature>
<feature type="region of interest" description="Disordered" evidence="2">
    <location>
        <begin position="239"/>
        <end position="261"/>
    </location>
</feature>
<feature type="compositionally biased region" description="Polar residues" evidence="2">
    <location>
        <begin position="56"/>
        <end position="73"/>
    </location>
</feature>
<feature type="binding site" evidence="1">
    <location>
        <position position="319"/>
    </location>
    <ligand>
        <name>ATP</name>
        <dbReference type="ChEBI" id="CHEBI:30616"/>
    </ligand>
</feature>
<feature type="binding site" evidence="1">
    <location>
        <begin position="359"/>
        <end position="364"/>
    </location>
    <ligand>
        <name>ATP</name>
        <dbReference type="ChEBI" id="CHEBI:30616"/>
    </ligand>
</feature>
<feature type="mutagenesis site" description="No effect on ATPase activity." evidence="3">
    <original>T</original>
    <variation>C</variation>
    <location>
        <position position="360"/>
    </location>
</feature>
<feature type="mutagenesis site" description="Abolishes ATPase activity." evidence="4">
    <original>K</original>
    <variation>A</variation>
    <location>
        <position position="362"/>
    </location>
</feature>
<feature type="mutagenesis site" description="Strongly inhibits ATPase activity." evidence="3">
    <original>C</original>
    <variation>A</variation>
    <location>
        <position position="368"/>
    </location>
</feature>
<feature type="mutagenesis site" description="Slightly inhibits ATPase activity." evidence="3">
    <original>C</original>
    <variation>A</variation>
    <location>
        <position position="373"/>
    </location>
</feature>
<feature type="mutagenesis site" description="Abolishes ATPase activity." evidence="4">
    <original>E</original>
    <variation>A</variation>
    <location>
        <position position="416"/>
    </location>
</feature>
<feature type="mutagenesis site" description="Abolishes ATPase activity." evidence="4">
    <original>N</original>
    <variation>A</variation>
    <location>
        <position position="461"/>
    </location>
</feature>
<feature type="mutagenesis site" description="Abolishes ATPase activity." evidence="4">
    <original>R</original>
    <variation>A</variation>
    <location>
        <position position="471"/>
    </location>
</feature>
<feature type="mutagenesis site" description="Abolishes ATPase activity." evidence="4">
    <original>R</original>
    <variation>A</variation>
    <location>
        <position position="472"/>
    </location>
</feature>
<feature type="mutagenesis site" description="Abolishes ATPase activity." evidence="4">
    <original>R</original>
    <variation>A</variation>
    <location>
        <position position="473"/>
    </location>
</feature>
<feature type="mutagenesis site" description="Slightly inhibits ATPase activity." evidence="3">
    <original>C</original>
    <variation>A</variation>
    <location>
        <position position="527"/>
    </location>
</feature>
<feature type="helix" evidence="7">
    <location>
        <begin position="289"/>
        <end position="291"/>
    </location>
</feature>
<feature type="helix" evidence="7">
    <location>
        <begin position="296"/>
        <end position="305"/>
    </location>
</feature>
<feature type="turn" evidence="7">
    <location>
        <begin position="314"/>
        <end position="317"/>
    </location>
</feature>
<feature type="helix" evidence="7">
    <location>
        <begin position="322"/>
        <end position="331"/>
    </location>
</feature>
<feature type="helix" evidence="7">
    <location>
        <begin position="333"/>
        <end position="337"/>
    </location>
</feature>
<feature type="turn" evidence="7">
    <location>
        <begin position="339"/>
        <end position="341"/>
    </location>
</feature>
<feature type="helix" evidence="7">
    <location>
        <begin position="344"/>
        <end position="346"/>
    </location>
</feature>
<feature type="strand" evidence="7">
    <location>
        <begin position="350"/>
        <end position="360"/>
    </location>
</feature>
<feature type="helix" evidence="7">
    <location>
        <begin position="362"/>
        <end position="372"/>
    </location>
</feature>
<feature type="strand" evidence="7">
    <location>
        <begin position="376"/>
        <end position="381"/>
    </location>
</feature>
<feature type="helix" evidence="7">
    <location>
        <begin position="382"/>
        <end position="386"/>
    </location>
</feature>
<feature type="turn" evidence="7">
    <location>
        <begin position="387"/>
        <end position="389"/>
    </location>
</feature>
<feature type="helix" evidence="7">
    <location>
        <begin position="393"/>
        <end position="406"/>
    </location>
</feature>
<feature type="strand" evidence="7">
    <location>
        <begin position="407"/>
        <end position="415"/>
    </location>
</feature>
<feature type="helix" evidence="7">
    <location>
        <begin position="417"/>
        <end position="421"/>
    </location>
</feature>
<feature type="helix" evidence="7">
    <location>
        <begin position="430"/>
        <end position="446"/>
    </location>
</feature>
<feature type="strand" evidence="7">
    <location>
        <begin position="454"/>
        <end position="461"/>
    </location>
</feature>
<feature type="helix" evidence="7">
    <location>
        <begin position="463"/>
        <end position="465"/>
    </location>
</feature>
<feature type="turn" evidence="7">
    <location>
        <begin position="468"/>
        <end position="473"/>
    </location>
</feature>
<feature type="strand" evidence="7">
    <location>
        <begin position="475"/>
        <end position="479"/>
    </location>
</feature>
<feature type="helix" evidence="7">
    <location>
        <begin position="485"/>
        <end position="496"/>
    </location>
</feature>
<feature type="helix" evidence="7">
    <location>
        <begin position="505"/>
        <end position="514"/>
    </location>
</feature>
<feature type="helix" evidence="7">
    <location>
        <begin position="520"/>
        <end position="536"/>
    </location>
</feature>
<feature type="helix" evidence="7">
    <location>
        <begin position="537"/>
        <end position="543"/>
    </location>
</feature>
<feature type="helix" evidence="7">
    <location>
        <begin position="547"/>
        <end position="549"/>
    </location>
</feature>
<feature type="helix" evidence="7">
    <location>
        <begin position="555"/>
        <end position="564"/>
    </location>
</feature>
<feature type="helix" evidence="7">
    <location>
        <begin position="571"/>
        <end position="584"/>
    </location>
</feature>
<name>FIGL1_CAEEL</name>